<feature type="chain" id="PRO_1000061429" description="UPF0235 protein YpsIP31758_0827">
    <location>
        <begin position="1"/>
        <end position="96"/>
    </location>
</feature>
<comment type="similarity">
    <text evidence="1">Belongs to the UPF0235 family.</text>
</comment>
<gene>
    <name type="ordered locus">YpsIP31758_0827</name>
</gene>
<proteinExistence type="inferred from homology"/>
<accession>A7FEY3</accession>
<protein>
    <recommendedName>
        <fullName evidence="1">UPF0235 protein YpsIP31758_0827</fullName>
    </recommendedName>
</protein>
<evidence type="ECO:0000255" key="1">
    <source>
        <dbReference type="HAMAP-Rule" id="MF_00634"/>
    </source>
</evidence>
<sequence>MSAVLSTENGLILKLYIQPKASRDQIVGLHGDELKVAITAPPVDGQANAHLVKFIAKQFRVAKSQVIIEKGELGRHKQIKVINPQQIPPEVTILLK</sequence>
<name>Y827_YERP3</name>
<dbReference type="EMBL" id="CP000720">
    <property type="protein sequence ID" value="ABS47631.1"/>
    <property type="molecule type" value="Genomic_DNA"/>
</dbReference>
<dbReference type="SMR" id="A7FEY3"/>
<dbReference type="KEGG" id="ypi:YpsIP31758_0827"/>
<dbReference type="HOGENOM" id="CLU_130694_6_0_6"/>
<dbReference type="Proteomes" id="UP000002412">
    <property type="component" value="Chromosome"/>
</dbReference>
<dbReference type="GO" id="GO:0005737">
    <property type="term" value="C:cytoplasm"/>
    <property type="evidence" value="ECO:0007669"/>
    <property type="project" value="TreeGrafter"/>
</dbReference>
<dbReference type="Gene3D" id="3.30.1200.10">
    <property type="entry name" value="YggU-like"/>
    <property type="match status" value="1"/>
</dbReference>
<dbReference type="HAMAP" id="MF_00634">
    <property type="entry name" value="UPF0235"/>
    <property type="match status" value="1"/>
</dbReference>
<dbReference type="InterPro" id="IPR003746">
    <property type="entry name" value="DUF167"/>
</dbReference>
<dbReference type="InterPro" id="IPR036591">
    <property type="entry name" value="YggU-like_sf"/>
</dbReference>
<dbReference type="NCBIfam" id="TIGR00251">
    <property type="entry name" value="DUF167 family protein"/>
    <property type="match status" value="1"/>
</dbReference>
<dbReference type="NCBIfam" id="NF003466">
    <property type="entry name" value="PRK05090.1"/>
    <property type="match status" value="1"/>
</dbReference>
<dbReference type="PANTHER" id="PTHR13420">
    <property type="entry name" value="UPF0235 PROTEIN C15ORF40"/>
    <property type="match status" value="1"/>
</dbReference>
<dbReference type="PANTHER" id="PTHR13420:SF7">
    <property type="entry name" value="UPF0235 PROTEIN C15ORF40"/>
    <property type="match status" value="1"/>
</dbReference>
<dbReference type="Pfam" id="PF02594">
    <property type="entry name" value="DUF167"/>
    <property type="match status" value="1"/>
</dbReference>
<dbReference type="SMART" id="SM01152">
    <property type="entry name" value="DUF167"/>
    <property type="match status" value="1"/>
</dbReference>
<dbReference type="SUPFAM" id="SSF69786">
    <property type="entry name" value="YggU-like"/>
    <property type="match status" value="1"/>
</dbReference>
<organism>
    <name type="scientific">Yersinia pseudotuberculosis serotype O:1b (strain IP 31758)</name>
    <dbReference type="NCBI Taxonomy" id="349747"/>
    <lineage>
        <taxon>Bacteria</taxon>
        <taxon>Pseudomonadati</taxon>
        <taxon>Pseudomonadota</taxon>
        <taxon>Gammaproteobacteria</taxon>
        <taxon>Enterobacterales</taxon>
        <taxon>Yersiniaceae</taxon>
        <taxon>Yersinia</taxon>
    </lineage>
</organism>
<reference key="1">
    <citation type="journal article" date="2007" name="PLoS Genet.">
        <title>The complete genome sequence of Yersinia pseudotuberculosis IP31758, the causative agent of Far East scarlet-like fever.</title>
        <authorList>
            <person name="Eppinger M."/>
            <person name="Rosovitz M.J."/>
            <person name="Fricke W.F."/>
            <person name="Rasko D.A."/>
            <person name="Kokorina G."/>
            <person name="Fayolle C."/>
            <person name="Lindler L.E."/>
            <person name="Carniel E."/>
            <person name="Ravel J."/>
        </authorList>
    </citation>
    <scope>NUCLEOTIDE SEQUENCE [LARGE SCALE GENOMIC DNA]</scope>
    <source>
        <strain>IP 31758</strain>
    </source>
</reference>